<proteinExistence type="inferred from homology"/>
<organism>
    <name type="scientific">Listeria monocytogenes serovar 1/2a (strain ATCC BAA-679 / EGD-e)</name>
    <dbReference type="NCBI Taxonomy" id="169963"/>
    <lineage>
        <taxon>Bacteria</taxon>
        <taxon>Bacillati</taxon>
        <taxon>Bacillota</taxon>
        <taxon>Bacilli</taxon>
        <taxon>Bacillales</taxon>
        <taxon>Listeriaceae</taxon>
        <taxon>Listeria</taxon>
    </lineage>
</organism>
<reference key="1">
    <citation type="journal article" date="2001" name="Science">
        <title>Comparative genomics of Listeria species.</title>
        <authorList>
            <person name="Glaser P."/>
            <person name="Frangeul L."/>
            <person name="Buchrieser C."/>
            <person name="Rusniok C."/>
            <person name="Amend A."/>
            <person name="Baquero F."/>
            <person name="Berche P."/>
            <person name="Bloecker H."/>
            <person name="Brandt P."/>
            <person name="Chakraborty T."/>
            <person name="Charbit A."/>
            <person name="Chetouani F."/>
            <person name="Couve E."/>
            <person name="de Daruvar A."/>
            <person name="Dehoux P."/>
            <person name="Domann E."/>
            <person name="Dominguez-Bernal G."/>
            <person name="Duchaud E."/>
            <person name="Durant L."/>
            <person name="Dussurget O."/>
            <person name="Entian K.-D."/>
            <person name="Fsihi H."/>
            <person name="Garcia-del Portillo F."/>
            <person name="Garrido P."/>
            <person name="Gautier L."/>
            <person name="Goebel W."/>
            <person name="Gomez-Lopez N."/>
            <person name="Hain T."/>
            <person name="Hauf J."/>
            <person name="Jackson D."/>
            <person name="Jones L.-M."/>
            <person name="Kaerst U."/>
            <person name="Kreft J."/>
            <person name="Kuhn M."/>
            <person name="Kunst F."/>
            <person name="Kurapkat G."/>
            <person name="Madueno E."/>
            <person name="Maitournam A."/>
            <person name="Mata Vicente J."/>
            <person name="Ng E."/>
            <person name="Nedjari H."/>
            <person name="Nordsiek G."/>
            <person name="Novella S."/>
            <person name="de Pablos B."/>
            <person name="Perez-Diaz J.-C."/>
            <person name="Purcell R."/>
            <person name="Remmel B."/>
            <person name="Rose M."/>
            <person name="Schlueter T."/>
            <person name="Simoes N."/>
            <person name="Tierrez A."/>
            <person name="Vazquez-Boland J.-A."/>
            <person name="Voss H."/>
            <person name="Wehland J."/>
            <person name="Cossart P."/>
        </authorList>
    </citation>
    <scope>NUCLEOTIDE SEQUENCE [LARGE SCALE GENOMIC DNA]</scope>
    <source>
        <strain>ATCC BAA-679 / EGD-e</strain>
    </source>
</reference>
<name>THIE_LISMO</name>
<keyword id="KW-0460">Magnesium</keyword>
<keyword id="KW-0479">Metal-binding</keyword>
<keyword id="KW-1185">Reference proteome</keyword>
<keyword id="KW-0784">Thiamine biosynthesis</keyword>
<keyword id="KW-0808">Transferase</keyword>
<protein>
    <recommendedName>
        <fullName evidence="1">Thiamine-phosphate synthase</fullName>
        <shortName evidence="1">TP synthase</shortName>
        <shortName evidence="1">TPS</shortName>
        <ecNumber evidence="1">2.5.1.3</ecNumber>
    </recommendedName>
    <alternativeName>
        <fullName evidence="1">Thiamine-phosphate pyrophosphorylase</fullName>
        <shortName evidence="1">TMP pyrophosphorylase</shortName>
        <shortName evidence="1">TMP-PPase</shortName>
    </alternativeName>
</protein>
<gene>
    <name evidence="1" type="primary">thiE</name>
    <name type="ordered locus">lmo0318</name>
</gene>
<accession>Q8YA44</accession>
<sequence length="214" mass="22398">MRAELAVYFIAGTQDIVRGTLPSVLEEALKGGITCFQYREKGAGSLQTASERKEMALECQKLCAKYQVPFIINDDVALALEIGADGIHVGQTDEAIRQVIASCSGKMKIGLSVHSVSEAKEAERLGAVDYIGVGPIFPTISKADAEPVSGTAILEEIRRAGITIPIVGIGGINETNSAEVLTAGADGVSVISAITQSDDCHSVIKQLKNPGSPS</sequence>
<comment type="function">
    <text evidence="1">Condenses 4-methyl-5-(beta-hydroxyethyl)thiazole monophosphate (THZ-P) and 2-methyl-4-amino-5-hydroxymethyl pyrimidine pyrophosphate (HMP-PP) to form thiamine monophosphate (TMP).</text>
</comment>
<comment type="catalytic activity">
    <reaction evidence="1">
        <text>2-[(2R,5Z)-2-carboxy-4-methylthiazol-5(2H)-ylidene]ethyl phosphate + 4-amino-2-methyl-5-(diphosphooxymethyl)pyrimidine + 2 H(+) = thiamine phosphate + CO2 + diphosphate</text>
        <dbReference type="Rhea" id="RHEA:47844"/>
        <dbReference type="ChEBI" id="CHEBI:15378"/>
        <dbReference type="ChEBI" id="CHEBI:16526"/>
        <dbReference type="ChEBI" id="CHEBI:33019"/>
        <dbReference type="ChEBI" id="CHEBI:37575"/>
        <dbReference type="ChEBI" id="CHEBI:57841"/>
        <dbReference type="ChEBI" id="CHEBI:62899"/>
        <dbReference type="EC" id="2.5.1.3"/>
    </reaction>
</comment>
<comment type="catalytic activity">
    <reaction evidence="1">
        <text>2-(2-carboxy-4-methylthiazol-5-yl)ethyl phosphate + 4-amino-2-methyl-5-(diphosphooxymethyl)pyrimidine + 2 H(+) = thiamine phosphate + CO2 + diphosphate</text>
        <dbReference type="Rhea" id="RHEA:47848"/>
        <dbReference type="ChEBI" id="CHEBI:15378"/>
        <dbReference type="ChEBI" id="CHEBI:16526"/>
        <dbReference type="ChEBI" id="CHEBI:33019"/>
        <dbReference type="ChEBI" id="CHEBI:37575"/>
        <dbReference type="ChEBI" id="CHEBI:57841"/>
        <dbReference type="ChEBI" id="CHEBI:62890"/>
        <dbReference type="EC" id="2.5.1.3"/>
    </reaction>
</comment>
<comment type="catalytic activity">
    <reaction evidence="1">
        <text>4-methyl-5-(2-phosphooxyethyl)-thiazole + 4-amino-2-methyl-5-(diphosphooxymethyl)pyrimidine + H(+) = thiamine phosphate + diphosphate</text>
        <dbReference type="Rhea" id="RHEA:22328"/>
        <dbReference type="ChEBI" id="CHEBI:15378"/>
        <dbReference type="ChEBI" id="CHEBI:33019"/>
        <dbReference type="ChEBI" id="CHEBI:37575"/>
        <dbReference type="ChEBI" id="CHEBI:57841"/>
        <dbReference type="ChEBI" id="CHEBI:58296"/>
        <dbReference type="EC" id="2.5.1.3"/>
    </reaction>
</comment>
<comment type="cofactor">
    <cofactor evidence="1">
        <name>Mg(2+)</name>
        <dbReference type="ChEBI" id="CHEBI:18420"/>
    </cofactor>
    <text evidence="1">Binds 1 Mg(2+) ion per subunit.</text>
</comment>
<comment type="pathway">
    <text evidence="1">Cofactor biosynthesis; thiamine diphosphate biosynthesis; thiamine phosphate from 4-amino-2-methyl-5-diphosphomethylpyrimidine and 4-methyl-5-(2-phosphoethyl)-thiazole: step 1/1.</text>
</comment>
<comment type="similarity">
    <text evidence="1">Belongs to the thiamine-phosphate synthase family.</text>
</comment>
<feature type="chain" id="PRO_0000157023" description="Thiamine-phosphate synthase">
    <location>
        <begin position="1"/>
        <end position="214"/>
    </location>
</feature>
<feature type="binding site" evidence="1">
    <location>
        <begin position="37"/>
        <end position="41"/>
    </location>
    <ligand>
        <name>4-amino-2-methyl-5-(diphosphooxymethyl)pyrimidine</name>
        <dbReference type="ChEBI" id="CHEBI:57841"/>
    </ligand>
</feature>
<feature type="binding site" evidence="1">
    <location>
        <position position="73"/>
    </location>
    <ligand>
        <name>4-amino-2-methyl-5-(diphosphooxymethyl)pyrimidine</name>
        <dbReference type="ChEBI" id="CHEBI:57841"/>
    </ligand>
</feature>
<feature type="binding site" evidence="1">
    <location>
        <position position="74"/>
    </location>
    <ligand>
        <name>Mg(2+)</name>
        <dbReference type="ChEBI" id="CHEBI:18420"/>
    </ligand>
</feature>
<feature type="binding site" evidence="1">
    <location>
        <position position="93"/>
    </location>
    <ligand>
        <name>Mg(2+)</name>
        <dbReference type="ChEBI" id="CHEBI:18420"/>
    </ligand>
</feature>
<feature type="binding site" evidence="1">
    <location>
        <position position="112"/>
    </location>
    <ligand>
        <name>4-amino-2-methyl-5-(diphosphooxymethyl)pyrimidine</name>
        <dbReference type="ChEBI" id="CHEBI:57841"/>
    </ligand>
</feature>
<feature type="binding site" evidence="1">
    <location>
        <begin position="139"/>
        <end position="141"/>
    </location>
    <ligand>
        <name>2-[(2R,5Z)-2-carboxy-4-methylthiazol-5(2H)-ylidene]ethyl phosphate</name>
        <dbReference type="ChEBI" id="CHEBI:62899"/>
    </ligand>
</feature>
<feature type="binding site" evidence="1">
    <location>
        <position position="142"/>
    </location>
    <ligand>
        <name>4-amino-2-methyl-5-(diphosphooxymethyl)pyrimidine</name>
        <dbReference type="ChEBI" id="CHEBI:57841"/>
    </ligand>
</feature>
<feature type="binding site" evidence="1">
    <location>
        <position position="171"/>
    </location>
    <ligand>
        <name>2-[(2R,5Z)-2-carboxy-4-methylthiazol-5(2H)-ylidene]ethyl phosphate</name>
        <dbReference type="ChEBI" id="CHEBI:62899"/>
    </ligand>
</feature>
<feature type="binding site" evidence="1">
    <location>
        <begin position="191"/>
        <end position="192"/>
    </location>
    <ligand>
        <name>2-[(2R,5Z)-2-carboxy-4-methylthiazol-5(2H)-ylidene]ethyl phosphate</name>
        <dbReference type="ChEBI" id="CHEBI:62899"/>
    </ligand>
</feature>
<evidence type="ECO:0000255" key="1">
    <source>
        <dbReference type="HAMAP-Rule" id="MF_00097"/>
    </source>
</evidence>
<dbReference type="EC" id="2.5.1.3" evidence="1"/>
<dbReference type="EMBL" id="AL591974">
    <property type="protein sequence ID" value="CAD00845.1"/>
    <property type="molecule type" value="Genomic_DNA"/>
</dbReference>
<dbReference type="PIR" id="AG1114">
    <property type="entry name" value="AG1114"/>
</dbReference>
<dbReference type="RefSeq" id="NP_463848.1">
    <property type="nucleotide sequence ID" value="NC_003210.1"/>
</dbReference>
<dbReference type="RefSeq" id="WP_009931880.1">
    <property type="nucleotide sequence ID" value="NZ_CP149495.1"/>
</dbReference>
<dbReference type="SMR" id="Q8YA44"/>
<dbReference type="STRING" id="169963.gene:17592969"/>
<dbReference type="PaxDb" id="169963-lmo0318"/>
<dbReference type="EnsemblBacteria" id="CAD00845">
    <property type="protein sequence ID" value="CAD00845"/>
    <property type="gene ID" value="CAD00845"/>
</dbReference>
<dbReference type="GeneID" id="987536"/>
<dbReference type="KEGG" id="lmo:lmo0318"/>
<dbReference type="PATRIC" id="fig|169963.11.peg.327"/>
<dbReference type="eggNOG" id="COG0352">
    <property type="taxonomic scope" value="Bacteria"/>
</dbReference>
<dbReference type="HOGENOM" id="CLU_018272_3_2_9"/>
<dbReference type="OrthoDB" id="9812206at2"/>
<dbReference type="PhylomeDB" id="Q8YA44"/>
<dbReference type="BioCyc" id="LMON169963:LMO0318-MONOMER"/>
<dbReference type="UniPathway" id="UPA00060">
    <property type="reaction ID" value="UER00141"/>
</dbReference>
<dbReference type="Proteomes" id="UP000000817">
    <property type="component" value="Chromosome"/>
</dbReference>
<dbReference type="GO" id="GO:0005737">
    <property type="term" value="C:cytoplasm"/>
    <property type="evidence" value="ECO:0000318"/>
    <property type="project" value="GO_Central"/>
</dbReference>
<dbReference type="GO" id="GO:0000287">
    <property type="term" value="F:magnesium ion binding"/>
    <property type="evidence" value="ECO:0007669"/>
    <property type="project" value="UniProtKB-UniRule"/>
</dbReference>
<dbReference type="GO" id="GO:0004789">
    <property type="term" value="F:thiamine-phosphate diphosphorylase activity"/>
    <property type="evidence" value="ECO:0000318"/>
    <property type="project" value="GO_Central"/>
</dbReference>
<dbReference type="GO" id="GO:0009228">
    <property type="term" value="P:thiamine biosynthetic process"/>
    <property type="evidence" value="ECO:0000318"/>
    <property type="project" value="GO_Central"/>
</dbReference>
<dbReference type="GO" id="GO:0009229">
    <property type="term" value="P:thiamine diphosphate biosynthetic process"/>
    <property type="evidence" value="ECO:0007669"/>
    <property type="project" value="UniProtKB-UniRule"/>
</dbReference>
<dbReference type="CDD" id="cd00564">
    <property type="entry name" value="TMP_TenI"/>
    <property type="match status" value="1"/>
</dbReference>
<dbReference type="FunFam" id="3.20.20.70:FF:000096">
    <property type="entry name" value="Thiamine-phosphate synthase"/>
    <property type="match status" value="1"/>
</dbReference>
<dbReference type="Gene3D" id="3.20.20.70">
    <property type="entry name" value="Aldolase class I"/>
    <property type="match status" value="1"/>
</dbReference>
<dbReference type="HAMAP" id="MF_00097">
    <property type="entry name" value="TMP_synthase"/>
    <property type="match status" value="1"/>
</dbReference>
<dbReference type="InterPro" id="IPR013785">
    <property type="entry name" value="Aldolase_TIM"/>
</dbReference>
<dbReference type="InterPro" id="IPR036206">
    <property type="entry name" value="ThiamineP_synth_sf"/>
</dbReference>
<dbReference type="InterPro" id="IPR022998">
    <property type="entry name" value="ThiamineP_synth_TenI"/>
</dbReference>
<dbReference type="InterPro" id="IPR034291">
    <property type="entry name" value="TMP_synthase"/>
</dbReference>
<dbReference type="NCBIfam" id="TIGR00693">
    <property type="entry name" value="thiE"/>
    <property type="match status" value="1"/>
</dbReference>
<dbReference type="PANTHER" id="PTHR20857">
    <property type="entry name" value="THIAMINE-PHOSPHATE PYROPHOSPHORYLASE"/>
    <property type="match status" value="1"/>
</dbReference>
<dbReference type="PANTHER" id="PTHR20857:SF15">
    <property type="entry name" value="THIAMINE-PHOSPHATE SYNTHASE"/>
    <property type="match status" value="1"/>
</dbReference>
<dbReference type="Pfam" id="PF02581">
    <property type="entry name" value="TMP-TENI"/>
    <property type="match status" value="1"/>
</dbReference>
<dbReference type="SUPFAM" id="SSF51391">
    <property type="entry name" value="Thiamin phosphate synthase"/>
    <property type="match status" value="1"/>
</dbReference>